<evidence type="ECO:0000250" key="1"/>
<evidence type="ECO:0000255" key="2">
    <source>
        <dbReference type="PROSITE-ProRule" id="PRU00108"/>
    </source>
</evidence>
<evidence type="ECO:0000256" key="3">
    <source>
        <dbReference type="SAM" id="MobiDB-lite"/>
    </source>
</evidence>
<evidence type="ECO:0000269" key="4">
    <source>
    </source>
</evidence>
<evidence type="ECO:0000305" key="5"/>
<reference key="1">
    <citation type="online journal article" date="1997" name="Plant Gene Register">
        <title>Nucleotide sequence of the Arabidopsis ATHB-4 gene encoding an HD-Zip protein related to ATHB-2.</title>
        <authorList>
            <person name="Steindler C."/>
            <person name="Morelli G."/>
            <person name="Ruberti I."/>
        </authorList>
        <locator>PGR97-021</locator>
    </citation>
    <scope>NUCLEOTIDE SEQUENCE [GENOMIC DNA]</scope>
    <source>
        <strain>cv. Columbia</strain>
    </source>
</reference>
<reference key="2">
    <citation type="submission" date="2002-04" db="EMBL/GenBank/DDBJ databases">
        <title>Nucleotide sequence of the Arabidopsis ATHB-4 mRNA, encoding an HD-Zip II protein related to ATHB-2.</title>
        <authorList>
            <person name="Steindler C."/>
            <person name="Carabelli M."/>
            <person name="Ciarbelli A.R."/>
            <person name="Ruzza V."/>
            <person name="Sessa G."/>
            <person name="Ruberti I."/>
        </authorList>
    </citation>
    <scope>NUCLEOTIDE SEQUENCE [MRNA]</scope>
    <source>
        <strain>cv. Columbia</strain>
    </source>
</reference>
<reference key="3">
    <citation type="journal article" date="1999" name="Nature">
        <title>Sequence and analysis of chromosome 2 of the plant Arabidopsis thaliana.</title>
        <authorList>
            <person name="Lin X."/>
            <person name="Kaul S."/>
            <person name="Rounsley S.D."/>
            <person name="Shea T.P."/>
            <person name="Benito M.-I."/>
            <person name="Town C.D."/>
            <person name="Fujii C.Y."/>
            <person name="Mason T.M."/>
            <person name="Bowman C.L."/>
            <person name="Barnstead M.E."/>
            <person name="Feldblyum T.V."/>
            <person name="Buell C.R."/>
            <person name="Ketchum K.A."/>
            <person name="Lee J.J."/>
            <person name="Ronning C.M."/>
            <person name="Koo H.L."/>
            <person name="Moffat K.S."/>
            <person name="Cronin L.A."/>
            <person name="Shen M."/>
            <person name="Pai G."/>
            <person name="Van Aken S."/>
            <person name="Umayam L."/>
            <person name="Tallon L.J."/>
            <person name="Gill J.E."/>
            <person name="Adams M.D."/>
            <person name="Carrera A.J."/>
            <person name="Creasy T.H."/>
            <person name="Goodman H.M."/>
            <person name="Somerville C.R."/>
            <person name="Copenhaver G.P."/>
            <person name="Preuss D."/>
            <person name="Nierman W.C."/>
            <person name="White O."/>
            <person name="Eisen J.A."/>
            <person name="Salzberg S.L."/>
            <person name="Fraser C.M."/>
            <person name="Venter J.C."/>
        </authorList>
    </citation>
    <scope>NUCLEOTIDE SEQUENCE [LARGE SCALE GENOMIC DNA]</scope>
    <source>
        <strain>cv. Columbia</strain>
    </source>
</reference>
<reference key="4">
    <citation type="journal article" date="2017" name="Plant J.">
        <title>Araport11: a complete reannotation of the Arabidopsis thaliana reference genome.</title>
        <authorList>
            <person name="Cheng C.Y."/>
            <person name="Krishnakumar V."/>
            <person name="Chan A.P."/>
            <person name="Thibaud-Nissen F."/>
            <person name="Schobel S."/>
            <person name="Town C.D."/>
        </authorList>
    </citation>
    <scope>GENOME REANNOTATION</scope>
    <source>
        <strain>cv. Columbia</strain>
    </source>
</reference>
<reference key="5">
    <citation type="journal article" date="1993" name="Plant J.">
        <title>The Arabidopsis Athb-2 and -4 genes are strongly induced by far-red-rich light.</title>
        <authorList>
            <person name="Carabelli M."/>
            <person name="Sessa G."/>
            <person name="Baima S."/>
            <person name="Morelli G."/>
            <person name="Ruberti I."/>
        </authorList>
    </citation>
    <scope>INDUCTION</scope>
</reference>
<reference key="6">
    <citation type="journal article" date="2005" name="Plant Physiol.">
        <title>Homeodomain leucine zipper class I genes in Arabidopsis. Expression patterns and phylogenetic relationships.</title>
        <authorList>
            <person name="Henriksson E."/>
            <person name="Olsson A.S.B."/>
            <person name="Johannesson H."/>
            <person name="Johansson H."/>
            <person name="Hanson J."/>
            <person name="Engstroem P."/>
            <person name="Soederman E."/>
        </authorList>
    </citation>
    <scope>GENE FAMILY</scope>
</reference>
<feature type="chain" id="PRO_0000048822" description="Homeobox-leucine zipper protein ATHB-4">
    <location>
        <begin position="1"/>
        <end position="318"/>
    </location>
</feature>
<feature type="DNA-binding region" description="Homeobox" evidence="2">
    <location>
        <begin position="160"/>
        <end position="219"/>
    </location>
</feature>
<feature type="region of interest" description="Disordered" evidence="3">
    <location>
        <begin position="1"/>
        <end position="23"/>
    </location>
</feature>
<feature type="region of interest" description="Disordered" evidence="3">
    <location>
        <begin position="128"/>
        <end position="165"/>
    </location>
</feature>
<feature type="region of interest" description="Leucine-zipper">
    <location>
        <begin position="227"/>
        <end position="248"/>
    </location>
</feature>
<feature type="compositionally biased region" description="Low complexity" evidence="3">
    <location>
        <begin position="8"/>
        <end position="17"/>
    </location>
</feature>
<feature type="compositionally biased region" description="Basic and acidic residues" evidence="3">
    <location>
        <begin position="128"/>
        <end position="140"/>
    </location>
</feature>
<keyword id="KW-0238">DNA-binding</keyword>
<keyword id="KW-0371">Homeobox</keyword>
<keyword id="KW-0539">Nucleus</keyword>
<keyword id="KW-1185">Reference proteome</keyword>
<keyword id="KW-0804">Transcription</keyword>
<keyword id="KW-0805">Transcription regulation</keyword>
<organism>
    <name type="scientific">Arabidopsis thaliana</name>
    <name type="common">Mouse-ear cress</name>
    <dbReference type="NCBI Taxonomy" id="3702"/>
    <lineage>
        <taxon>Eukaryota</taxon>
        <taxon>Viridiplantae</taxon>
        <taxon>Streptophyta</taxon>
        <taxon>Embryophyta</taxon>
        <taxon>Tracheophyta</taxon>
        <taxon>Spermatophyta</taxon>
        <taxon>Magnoliopsida</taxon>
        <taxon>eudicotyledons</taxon>
        <taxon>Gunneridae</taxon>
        <taxon>Pentapetalae</taxon>
        <taxon>rosids</taxon>
        <taxon>malvids</taxon>
        <taxon>Brassicales</taxon>
        <taxon>Brassicaceae</taxon>
        <taxon>Camelineae</taxon>
        <taxon>Arabidopsis</taxon>
    </lineage>
</organism>
<name>ATHB4_ARATH</name>
<accession>P92953</accession>
<accession>Q546G8</accession>
<proteinExistence type="evidence at protein level"/>
<gene>
    <name type="primary">ATHB-4</name>
    <name type="ordered locus">At2g44910</name>
    <name type="ORF">T13E15.8</name>
</gene>
<dbReference type="EMBL" id="Y09582">
    <property type="protein sequence ID" value="CAA70771.1"/>
    <property type="molecule type" value="Genomic_DNA"/>
</dbReference>
<dbReference type="EMBL" id="AJ441251">
    <property type="protein sequence ID" value="CAD29650.1"/>
    <property type="molecule type" value="mRNA"/>
</dbReference>
<dbReference type="EMBL" id="AC002388">
    <property type="protein sequence ID" value="AAC31833.1"/>
    <property type="molecule type" value="Genomic_DNA"/>
</dbReference>
<dbReference type="EMBL" id="CP002685">
    <property type="protein sequence ID" value="AEC10483.1"/>
    <property type="molecule type" value="Genomic_DNA"/>
</dbReference>
<dbReference type="PIR" id="T00402">
    <property type="entry name" value="T00402"/>
</dbReference>
<dbReference type="SMR" id="P92953"/>
<dbReference type="BioGRID" id="4436">
    <property type="interactions" value="13"/>
</dbReference>
<dbReference type="FunCoup" id="P92953">
    <property type="interactions" value="20"/>
</dbReference>
<dbReference type="IntAct" id="P92953">
    <property type="interactions" value="14"/>
</dbReference>
<dbReference type="STRING" id="3702.P92953"/>
<dbReference type="iPTMnet" id="P92953"/>
<dbReference type="PaxDb" id="3702-AT2G44910.1"/>
<dbReference type="EnsemblPlants" id="AT2G44910.1">
    <property type="protein sequence ID" value="AT2G44910.1"/>
    <property type="gene ID" value="AT2G44910"/>
</dbReference>
<dbReference type="GeneID" id="819100"/>
<dbReference type="Gramene" id="AT2G44910.1">
    <property type="protein sequence ID" value="AT2G44910.1"/>
    <property type="gene ID" value="AT2G44910"/>
</dbReference>
<dbReference type="KEGG" id="ath:AT2G44910"/>
<dbReference type="Araport" id="AT2G44910"/>
<dbReference type="TAIR" id="AT2G44910">
    <property type="gene designation" value="HB4"/>
</dbReference>
<dbReference type="eggNOG" id="KOG0483">
    <property type="taxonomic scope" value="Eukaryota"/>
</dbReference>
<dbReference type="HOGENOM" id="CLU_049516_2_1_1"/>
<dbReference type="InParanoid" id="P92953"/>
<dbReference type="OMA" id="WTHLFQS"/>
<dbReference type="PhylomeDB" id="P92953"/>
<dbReference type="PRO" id="PR:P92953"/>
<dbReference type="Proteomes" id="UP000006548">
    <property type="component" value="Chromosome 2"/>
</dbReference>
<dbReference type="ExpressionAtlas" id="P92953">
    <property type="expression patterns" value="baseline and differential"/>
</dbReference>
<dbReference type="GO" id="GO:0005634">
    <property type="term" value="C:nucleus"/>
    <property type="evidence" value="ECO:0007669"/>
    <property type="project" value="UniProtKB-SubCell"/>
</dbReference>
<dbReference type="GO" id="GO:0009506">
    <property type="term" value="C:plasmodesma"/>
    <property type="evidence" value="ECO:0007005"/>
    <property type="project" value="TAIR"/>
</dbReference>
<dbReference type="GO" id="GO:0003700">
    <property type="term" value="F:DNA-binding transcription factor activity"/>
    <property type="evidence" value="ECO:0000250"/>
    <property type="project" value="TAIR"/>
</dbReference>
<dbReference type="GO" id="GO:0000981">
    <property type="term" value="F:DNA-binding transcription factor activity, RNA polymerase II-specific"/>
    <property type="evidence" value="ECO:0007669"/>
    <property type="project" value="InterPro"/>
</dbReference>
<dbReference type="GO" id="GO:0043565">
    <property type="term" value="F:sequence-specific DNA binding"/>
    <property type="evidence" value="ECO:0007669"/>
    <property type="project" value="InterPro"/>
</dbReference>
<dbReference type="GO" id="GO:0006355">
    <property type="term" value="P:regulation of DNA-templated transcription"/>
    <property type="evidence" value="ECO:0000315"/>
    <property type="project" value="TAIR"/>
</dbReference>
<dbReference type="GO" id="GO:0010218">
    <property type="term" value="P:response to far red light"/>
    <property type="evidence" value="ECO:0000270"/>
    <property type="project" value="TAIR"/>
</dbReference>
<dbReference type="GO" id="GO:0009725">
    <property type="term" value="P:response to hormone"/>
    <property type="evidence" value="ECO:0000315"/>
    <property type="project" value="TAIR"/>
</dbReference>
<dbReference type="GO" id="GO:0009641">
    <property type="term" value="P:shade avoidance"/>
    <property type="evidence" value="ECO:0000270"/>
    <property type="project" value="TAIR"/>
</dbReference>
<dbReference type="CDD" id="cd00086">
    <property type="entry name" value="homeodomain"/>
    <property type="match status" value="1"/>
</dbReference>
<dbReference type="FunFam" id="1.10.10.60:FF:000577">
    <property type="entry name" value="Homeobox-leucine zipper protein 18"/>
    <property type="match status" value="1"/>
</dbReference>
<dbReference type="Gene3D" id="1.10.10.60">
    <property type="entry name" value="Homeodomain-like"/>
    <property type="match status" value="1"/>
</dbReference>
<dbReference type="InterPro" id="IPR001356">
    <property type="entry name" value="HD"/>
</dbReference>
<dbReference type="InterPro" id="IPR050762">
    <property type="entry name" value="HD-ZIP_Homeobox_LZ_Class_II"/>
</dbReference>
<dbReference type="InterPro" id="IPR006712">
    <property type="entry name" value="HD-ZIP_N"/>
</dbReference>
<dbReference type="InterPro" id="IPR017970">
    <property type="entry name" value="Homeobox_CS"/>
</dbReference>
<dbReference type="InterPro" id="IPR009057">
    <property type="entry name" value="Homeodomain-like_sf"/>
</dbReference>
<dbReference type="InterPro" id="IPR003106">
    <property type="entry name" value="Leu_zip_homeo"/>
</dbReference>
<dbReference type="PANTHER" id="PTHR45714:SF94">
    <property type="entry name" value="HOMEOBOX-LEUCINE ZIPPER PROTEIN ATHB-4"/>
    <property type="match status" value="1"/>
</dbReference>
<dbReference type="PANTHER" id="PTHR45714">
    <property type="entry name" value="HOMEOBOX-LEUCINE ZIPPER PROTEIN HAT14"/>
    <property type="match status" value="1"/>
</dbReference>
<dbReference type="Pfam" id="PF02183">
    <property type="entry name" value="HALZ"/>
    <property type="match status" value="1"/>
</dbReference>
<dbReference type="Pfam" id="PF04618">
    <property type="entry name" value="HD-ZIP_N"/>
    <property type="match status" value="1"/>
</dbReference>
<dbReference type="Pfam" id="PF00046">
    <property type="entry name" value="Homeodomain"/>
    <property type="match status" value="1"/>
</dbReference>
<dbReference type="SMART" id="SM00340">
    <property type="entry name" value="HALZ"/>
    <property type="match status" value="1"/>
</dbReference>
<dbReference type="SMART" id="SM00389">
    <property type="entry name" value="HOX"/>
    <property type="match status" value="1"/>
</dbReference>
<dbReference type="SUPFAM" id="SSF46689">
    <property type="entry name" value="Homeodomain-like"/>
    <property type="match status" value="1"/>
</dbReference>
<dbReference type="PROSITE" id="PS00027">
    <property type="entry name" value="HOMEOBOX_1"/>
    <property type="match status" value="1"/>
</dbReference>
<dbReference type="PROSITE" id="PS50071">
    <property type="entry name" value="HOMEOBOX_2"/>
    <property type="match status" value="1"/>
</dbReference>
<protein>
    <recommendedName>
        <fullName>Homeobox-leucine zipper protein ATHB-4</fullName>
    </recommendedName>
    <alternativeName>
        <fullName>HD-ZIP protein ATHB-4</fullName>
    </alternativeName>
    <alternativeName>
        <fullName>Homeodomain transcription factor ATHB-4</fullName>
    </alternativeName>
</protein>
<sequence>MGERDDGLGLSLSLGNSQQKEPSLRLNLMPLTTSSSSSSFQHMHNQNNNSHPQKIHNISWTHLFQSSGIKRTTAERNSDAGSFLRGFNVNRAQSSVAVVDLEEEAAVVSSPNSAVSSLSGNKRDLAVARGGDENEAERASCSRGGGSGGSDDEDGGNGDGSRKKLRLSKDQALVLEETFKEHSTLNPKQKLALAKQLNLRARQVEVWFQNRRARTKLKQTEVDCEYLKRCCDNLTEENRRLQKEVSELRALKLSPHLYMHMTPPTTLTMCPSCERVSSSAATVTAAPSTTTTPTVVGRPSPQRLTPWTAISLQQKSGR</sequence>
<comment type="function">
    <text evidence="1">Probable transcription factor.</text>
</comment>
<comment type="interaction">
    <interactant intactId="EBI-15192259">
        <id>P92953</id>
    </interactant>
    <interactant intactId="EBI-1536772">
        <id>O04292</id>
        <label>ATHB-9</label>
    </interactant>
    <organismsDiffer>false</organismsDiffer>
    <experiments>4</experiments>
</comment>
<comment type="interaction">
    <interactant intactId="EBI-15192259">
        <id>P92953</id>
    </interactant>
    <interactant intactId="EBI-3133795">
        <id>Q8GXM7</id>
        <label>ATHB-X</label>
    </interactant>
    <organismsDiffer>false</organismsDiffer>
    <experiments>5</experiments>
</comment>
<comment type="interaction">
    <interactant intactId="EBI-15192259">
        <id>P92953</id>
    </interactant>
    <interactant intactId="EBI-15195911">
        <id>P46600</id>
        <label>HAT1</label>
    </interactant>
    <organismsDiffer>false</organismsDiffer>
    <experiments>4</experiments>
</comment>
<comment type="interaction">
    <interactant intactId="EBI-15192259">
        <id>P92953</id>
    </interactant>
    <interactant intactId="EBI-15193025">
        <id>Q9LXU1</id>
        <label>NOT9B</label>
    </interactant>
    <organismsDiffer>false</organismsDiffer>
    <experiments>3</experiments>
</comment>
<comment type="subcellular location">
    <subcellularLocation>
        <location evidence="5">Nucleus</location>
    </subcellularLocation>
</comment>
<comment type="induction">
    <text evidence="4">By transition from light to far-red light.</text>
</comment>
<comment type="similarity">
    <text evidence="5">Belongs to the HD-ZIP homeobox family. Class II subfamily.</text>
</comment>